<protein>
    <recommendedName>
        <fullName evidence="1">Ribosomal RNA small subunit methyltransferase G</fullName>
        <ecNumber evidence="1">2.1.1.-</ecNumber>
    </recommendedName>
    <alternativeName>
        <fullName evidence="1">16S rRNA 7-methylguanosine methyltransferase</fullName>
        <shortName evidence="1">16S rRNA m7G methyltransferase</shortName>
    </alternativeName>
</protein>
<reference key="1">
    <citation type="journal article" date="2003" name="Genome Res.">
        <title>Comparative complete genome sequence analysis of the amino acid replacements responsible for the thermostability of Corynebacterium efficiens.</title>
        <authorList>
            <person name="Nishio Y."/>
            <person name="Nakamura Y."/>
            <person name="Kawarabayasi Y."/>
            <person name="Usuda Y."/>
            <person name="Kimura E."/>
            <person name="Sugimoto S."/>
            <person name="Matsui K."/>
            <person name="Yamagishi A."/>
            <person name="Kikuchi H."/>
            <person name="Ikeo K."/>
            <person name="Gojobori T."/>
        </authorList>
    </citation>
    <scope>NUCLEOTIDE SEQUENCE [LARGE SCALE GENOMIC DNA]</scope>
    <source>
        <strain>DSM 44549 / YS-314 / AJ 12310 / JCM 11189 / NBRC 100395</strain>
    </source>
</reference>
<dbReference type="EC" id="2.1.1.-" evidence="1"/>
<dbReference type="EMBL" id="BA000035">
    <property type="protein sequence ID" value="BAC19753.1"/>
    <property type="status" value="ALT_INIT"/>
    <property type="molecule type" value="Genomic_DNA"/>
</dbReference>
<dbReference type="RefSeq" id="WP_006768701.1">
    <property type="nucleotide sequence ID" value="NZ_GG700684.1"/>
</dbReference>
<dbReference type="SMR" id="Q8FSV1"/>
<dbReference type="STRING" id="196164.gene:10743393"/>
<dbReference type="KEGG" id="cef:CE2943"/>
<dbReference type="eggNOG" id="COG0357">
    <property type="taxonomic scope" value="Bacteria"/>
</dbReference>
<dbReference type="HOGENOM" id="CLU_065341_5_0_11"/>
<dbReference type="OrthoDB" id="9808773at2"/>
<dbReference type="Proteomes" id="UP000001409">
    <property type="component" value="Chromosome"/>
</dbReference>
<dbReference type="GO" id="GO:0005829">
    <property type="term" value="C:cytosol"/>
    <property type="evidence" value="ECO:0007669"/>
    <property type="project" value="TreeGrafter"/>
</dbReference>
<dbReference type="GO" id="GO:0070043">
    <property type="term" value="F:rRNA (guanine-N7-)-methyltransferase activity"/>
    <property type="evidence" value="ECO:0007669"/>
    <property type="project" value="UniProtKB-UniRule"/>
</dbReference>
<dbReference type="Gene3D" id="3.40.50.150">
    <property type="entry name" value="Vaccinia Virus protein VP39"/>
    <property type="match status" value="1"/>
</dbReference>
<dbReference type="HAMAP" id="MF_00074">
    <property type="entry name" value="16SrRNA_methyltr_G"/>
    <property type="match status" value="1"/>
</dbReference>
<dbReference type="InterPro" id="IPR003682">
    <property type="entry name" value="rRNA_ssu_MeTfrase_G"/>
</dbReference>
<dbReference type="InterPro" id="IPR029063">
    <property type="entry name" value="SAM-dependent_MTases_sf"/>
</dbReference>
<dbReference type="NCBIfam" id="TIGR00138">
    <property type="entry name" value="rsmG_gidB"/>
    <property type="match status" value="1"/>
</dbReference>
<dbReference type="PANTHER" id="PTHR31760">
    <property type="entry name" value="S-ADENOSYL-L-METHIONINE-DEPENDENT METHYLTRANSFERASES SUPERFAMILY PROTEIN"/>
    <property type="match status" value="1"/>
</dbReference>
<dbReference type="PANTHER" id="PTHR31760:SF0">
    <property type="entry name" value="S-ADENOSYL-L-METHIONINE-DEPENDENT METHYLTRANSFERASES SUPERFAMILY PROTEIN"/>
    <property type="match status" value="1"/>
</dbReference>
<dbReference type="Pfam" id="PF02527">
    <property type="entry name" value="GidB"/>
    <property type="match status" value="1"/>
</dbReference>
<dbReference type="SUPFAM" id="SSF53335">
    <property type="entry name" value="S-adenosyl-L-methionine-dependent methyltransferases"/>
    <property type="match status" value="1"/>
</dbReference>
<name>RSMG_COREF</name>
<accession>Q8FSV1</accession>
<sequence>MVDTALHPIPGRRTPPHPRSTLPLTTPPAAAELFGDNLDKAIAYHESLATDGSVRGFIGPREIPRLWDRHILNCGVIGEAMEEGISVADVGSGAGLPGIPLAIARPDLKIILIEPLLKRSVYLGEVIEQLGLDNVSVIRGRAEEKAVRKQVGHVDVVTSRAVAPLGRLASWSLPLAKVGGRMIAMKGASVAEEIERDAKAIRNAGGGEVKVFTVGGELLDEPTTLISIRREK</sequence>
<keyword id="KW-0963">Cytoplasm</keyword>
<keyword id="KW-0489">Methyltransferase</keyword>
<keyword id="KW-1185">Reference proteome</keyword>
<keyword id="KW-0698">rRNA processing</keyword>
<keyword id="KW-0949">S-adenosyl-L-methionine</keyword>
<keyword id="KW-0808">Transferase</keyword>
<feature type="chain" id="PRO_0000184241" description="Ribosomal RNA small subunit methyltransferase G">
    <location>
        <begin position="1"/>
        <end position="232"/>
    </location>
</feature>
<feature type="region of interest" description="Disordered" evidence="2">
    <location>
        <begin position="1"/>
        <end position="24"/>
    </location>
</feature>
<feature type="binding site" evidence="1">
    <location>
        <position position="91"/>
    </location>
    <ligand>
        <name>S-adenosyl-L-methionine</name>
        <dbReference type="ChEBI" id="CHEBI:59789"/>
    </ligand>
</feature>
<feature type="binding site" evidence="1">
    <location>
        <position position="96"/>
    </location>
    <ligand>
        <name>S-adenosyl-L-methionine</name>
        <dbReference type="ChEBI" id="CHEBI:59789"/>
    </ligand>
</feature>
<feature type="binding site" evidence="1">
    <location>
        <begin position="142"/>
        <end position="143"/>
    </location>
    <ligand>
        <name>S-adenosyl-L-methionine</name>
        <dbReference type="ChEBI" id="CHEBI:59789"/>
    </ligand>
</feature>
<feature type="binding site" evidence="1">
    <location>
        <position position="160"/>
    </location>
    <ligand>
        <name>S-adenosyl-L-methionine</name>
        <dbReference type="ChEBI" id="CHEBI:59789"/>
    </ligand>
</feature>
<organism>
    <name type="scientific">Corynebacterium efficiens (strain DSM 44549 / YS-314 / AJ 12310 / JCM 11189 / NBRC 100395)</name>
    <dbReference type="NCBI Taxonomy" id="196164"/>
    <lineage>
        <taxon>Bacteria</taxon>
        <taxon>Bacillati</taxon>
        <taxon>Actinomycetota</taxon>
        <taxon>Actinomycetes</taxon>
        <taxon>Mycobacteriales</taxon>
        <taxon>Corynebacteriaceae</taxon>
        <taxon>Corynebacterium</taxon>
    </lineage>
</organism>
<proteinExistence type="inferred from homology"/>
<gene>
    <name evidence="1" type="primary">rsmG</name>
    <name type="ordered locus">CE2943</name>
</gene>
<evidence type="ECO:0000255" key="1">
    <source>
        <dbReference type="HAMAP-Rule" id="MF_00074"/>
    </source>
</evidence>
<evidence type="ECO:0000256" key="2">
    <source>
        <dbReference type="SAM" id="MobiDB-lite"/>
    </source>
</evidence>
<evidence type="ECO:0000305" key="3"/>
<comment type="function">
    <text evidence="1">Specifically methylates the N7 position of guanine in position 518 of 16S rRNA.</text>
</comment>
<comment type="subcellular location">
    <subcellularLocation>
        <location evidence="1">Cytoplasm</location>
    </subcellularLocation>
</comment>
<comment type="similarity">
    <text evidence="1">Belongs to the methyltransferase superfamily. RNA methyltransferase RsmG family.</text>
</comment>
<comment type="sequence caution" evidence="3">
    <conflict type="erroneous initiation">
        <sequence resource="EMBL-CDS" id="BAC19753"/>
    </conflict>
</comment>